<name>MBHM_ECO57</name>
<organism>
    <name type="scientific">Escherichia coli O157:H7</name>
    <dbReference type="NCBI Taxonomy" id="83334"/>
    <lineage>
        <taxon>Bacteria</taxon>
        <taxon>Pseudomonadati</taxon>
        <taxon>Pseudomonadota</taxon>
        <taxon>Gammaproteobacteria</taxon>
        <taxon>Enterobacterales</taxon>
        <taxon>Enterobacteriaceae</taxon>
        <taxon>Escherichia</taxon>
    </lineage>
</organism>
<comment type="function">
    <text evidence="1">This is one of three E.coli hydrogenases synthesized in response to different physiological conditions. HYD2 is involved in hydrogen uptake (By similarity).</text>
</comment>
<comment type="catalytic activity">
    <reaction>
        <text>H2 + A = AH2</text>
        <dbReference type="Rhea" id="RHEA:12116"/>
        <dbReference type="ChEBI" id="CHEBI:13193"/>
        <dbReference type="ChEBI" id="CHEBI:17499"/>
        <dbReference type="ChEBI" id="CHEBI:18276"/>
        <dbReference type="EC" id="1.12.99.6"/>
    </reaction>
</comment>
<comment type="cofactor">
    <cofactor evidence="1">
        <name>Ni(2+)</name>
        <dbReference type="ChEBI" id="CHEBI:49786"/>
    </cofactor>
    <text evidence="1">Binds 1 nickel ion per subunit.</text>
</comment>
<comment type="subunit">
    <text evidence="1">Heterodimer of a large and a small subunit.</text>
</comment>
<comment type="subcellular location">
    <subcellularLocation>
        <location evidence="1">Cell membrane</location>
        <topology evidence="1">Peripheral membrane protein</topology>
    </subcellularLocation>
</comment>
<comment type="similarity">
    <text evidence="3">Belongs to the [NiFe]/[NiFeSe] hydrogenase large subunit family.</text>
</comment>
<keyword id="KW-1003">Cell membrane</keyword>
<keyword id="KW-0472">Membrane</keyword>
<keyword id="KW-0479">Metal-binding</keyword>
<keyword id="KW-0533">Nickel</keyword>
<keyword id="KW-0560">Oxidoreductase</keyword>
<keyword id="KW-1185">Reference proteome</keyword>
<gene>
    <name type="primary">hybC</name>
    <name type="ordered locus">Z4348</name>
    <name type="ordered locus">ECs3879</name>
</gene>
<proteinExistence type="inferred from homology"/>
<reference key="1">
    <citation type="journal article" date="2001" name="Nature">
        <title>Genome sequence of enterohaemorrhagic Escherichia coli O157:H7.</title>
        <authorList>
            <person name="Perna N.T."/>
            <person name="Plunkett G. III"/>
            <person name="Burland V."/>
            <person name="Mau B."/>
            <person name="Glasner J.D."/>
            <person name="Rose D.J."/>
            <person name="Mayhew G.F."/>
            <person name="Evans P.S."/>
            <person name="Gregor J."/>
            <person name="Kirkpatrick H.A."/>
            <person name="Posfai G."/>
            <person name="Hackett J."/>
            <person name="Klink S."/>
            <person name="Boutin A."/>
            <person name="Shao Y."/>
            <person name="Miller L."/>
            <person name="Grotbeck E.J."/>
            <person name="Davis N.W."/>
            <person name="Lim A."/>
            <person name="Dimalanta E.T."/>
            <person name="Potamousis K."/>
            <person name="Apodaca J."/>
            <person name="Anantharaman T.S."/>
            <person name="Lin J."/>
            <person name="Yen G."/>
            <person name="Schwartz D.C."/>
            <person name="Welch R.A."/>
            <person name="Blattner F.R."/>
        </authorList>
    </citation>
    <scope>NUCLEOTIDE SEQUENCE [LARGE SCALE GENOMIC DNA]</scope>
    <source>
        <strain>O157:H7 / EDL933 / ATCC 700927 / EHEC</strain>
    </source>
</reference>
<reference key="2">
    <citation type="journal article" date="2001" name="DNA Res.">
        <title>Complete genome sequence of enterohemorrhagic Escherichia coli O157:H7 and genomic comparison with a laboratory strain K-12.</title>
        <authorList>
            <person name="Hayashi T."/>
            <person name="Makino K."/>
            <person name="Ohnishi M."/>
            <person name="Kurokawa K."/>
            <person name="Ishii K."/>
            <person name="Yokoyama K."/>
            <person name="Han C.-G."/>
            <person name="Ohtsubo E."/>
            <person name="Nakayama K."/>
            <person name="Murata T."/>
            <person name="Tanaka M."/>
            <person name="Tobe T."/>
            <person name="Iida T."/>
            <person name="Takami H."/>
            <person name="Honda T."/>
            <person name="Sasakawa C."/>
            <person name="Ogasawara N."/>
            <person name="Yasunaga T."/>
            <person name="Kuhara S."/>
            <person name="Shiba T."/>
            <person name="Hattori M."/>
            <person name="Shinagawa H."/>
        </authorList>
    </citation>
    <scope>NUCLEOTIDE SEQUENCE [LARGE SCALE GENOMIC DNA]</scope>
    <source>
        <strain>O157:H7 / Sakai / RIMD 0509952 / EHEC</strain>
    </source>
</reference>
<sequence>MSQRITIDPVTRIEGHLRIDCEIENGVVSKAWASGTMWRGMEEIVKNRDPRDAWMIVQRICGVCTTTHALSSVRAAESALNIDVPVNAQYIRNIILAAHTTHDHIVHFYQLSALDWVDITSALQADPTKASEMLKGVSTWHLNSPEEFTKVQNKIKDLVASGQLGIFANGYWGHPAMKLPPEVNLIAVAHYLQALECQRDANRVVALLGGKTPHIQNLAVGGVANPINLDGLGVLNLERLMYIKSFIDKLSDFVEQVYKVDTAVIAAFYPEWLTRGKGAVNYLSVPEFPTDSKNGSFLFPGGYIENADLSSYRPITSHSDEYLIKGIQESAKHSWYKDEAPQAPWEGTTIPAYDGWSDDGKYSWVKSPTFYGKTVEVGPLANMLVKLAAGRESTQNKLNEIVAIYQKLTGNTLEVAQLHSTLGRIIGRTVHCCELQDILQNQYSALITNIGKGDHTTFVKPNIPATGEFKGVGFLEAPRGMLSHWMVIKDGIISNYQAVVPSTWNSGPRNFNDDVGPYEQSLVGTPVADPNKPLEVVRTIHSFDPCMACAVHVVDADGNEVVSVKVL</sequence>
<feature type="initiator methionine" description="Removed" evidence="1">
    <location>
        <position position="1"/>
    </location>
</feature>
<feature type="chain" id="PRO_0000042990" description="Hydrogenase-2 large chain">
    <location>
        <begin position="2"/>
        <end position="552"/>
    </location>
</feature>
<feature type="propeptide" id="PRO_0000042991">
    <location>
        <begin position="553"/>
        <end position="567"/>
    </location>
</feature>
<feature type="binding site" evidence="2">
    <location>
        <position position="61"/>
    </location>
    <ligand>
        <name>Ni(2+)</name>
        <dbReference type="ChEBI" id="CHEBI:49786"/>
    </ligand>
</feature>
<feature type="binding site" evidence="2">
    <location>
        <position position="64"/>
    </location>
    <ligand>
        <name>Ni(2+)</name>
        <dbReference type="ChEBI" id="CHEBI:49786"/>
    </ligand>
</feature>
<feature type="binding site" evidence="2">
    <location>
        <position position="546"/>
    </location>
    <ligand>
        <name>Ni(2+)</name>
        <dbReference type="ChEBI" id="CHEBI:49786"/>
    </ligand>
</feature>
<feature type="binding site" evidence="2">
    <location>
        <position position="549"/>
    </location>
    <ligand>
        <name>Ni(2+)</name>
        <dbReference type="ChEBI" id="CHEBI:49786"/>
    </ligand>
</feature>
<feature type="site" description="Cleavage; by HybD" evidence="1">
    <location>
        <begin position="552"/>
        <end position="553"/>
    </location>
</feature>
<evidence type="ECO:0000250" key="1"/>
<evidence type="ECO:0000255" key="2"/>
<evidence type="ECO:0000305" key="3"/>
<accession>P0ACE1</accession>
<accession>P37181</accession>
<protein>
    <recommendedName>
        <fullName>Hydrogenase-2 large chain</fullName>
        <shortName>HYD2</shortName>
        <ecNumber>1.12.99.6</ecNumber>
    </recommendedName>
    <alternativeName>
        <fullName>Membrane-bound hydrogenase 2 large subunit</fullName>
    </alternativeName>
    <alternativeName>
        <fullName>NiFe hydrogenase</fullName>
    </alternativeName>
</protein>
<dbReference type="EC" id="1.12.99.6"/>
<dbReference type="EMBL" id="AE005174">
    <property type="protein sequence ID" value="AAG58131.1"/>
    <property type="molecule type" value="Genomic_DNA"/>
</dbReference>
<dbReference type="EMBL" id="BA000007">
    <property type="protein sequence ID" value="BAB37302.1"/>
    <property type="molecule type" value="Genomic_DNA"/>
</dbReference>
<dbReference type="PIR" id="G85958">
    <property type="entry name" value="G85958"/>
</dbReference>
<dbReference type="PIR" id="G91113">
    <property type="entry name" value="G91113"/>
</dbReference>
<dbReference type="RefSeq" id="NP_311906.1">
    <property type="nucleotide sequence ID" value="NC_002695.1"/>
</dbReference>
<dbReference type="RefSeq" id="WP_000083065.1">
    <property type="nucleotide sequence ID" value="NZ_VOAI01000009.1"/>
</dbReference>
<dbReference type="SMR" id="P0ACE1"/>
<dbReference type="STRING" id="155864.Z4348"/>
<dbReference type="GeneID" id="75203605"/>
<dbReference type="GeneID" id="916295"/>
<dbReference type="KEGG" id="ece:Z4348"/>
<dbReference type="KEGG" id="ecs:ECs_3879"/>
<dbReference type="PATRIC" id="fig|386585.9.peg.4046"/>
<dbReference type="eggNOG" id="COG0374">
    <property type="taxonomic scope" value="Bacteria"/>
</dbReference>
<dbReference type="HOGENOM" id="CLU_030087_0_0_6"/>
<dbReference type="OMA" id="NDEPGPY"/>
<dbReference type="Proteomes" id="UP000000558">
    <property type="component" value="Chromosome"/>
</dbReference>
<dbReference type="Proteomes" id="UP000002519">
    <property type="component" value="Chromosome"/>
</dbReference>
<dbReference type="GO" id="GO:0005886">
    <property type="term" value="C:plasma membrane"/>
    <property type="evidence" value="ECO:0007669"/>
    <property type="project" value="UniProtKB-SubCell"/>
</dbReference>
<dbReference type="GO" id="GO:0008901">
    <property type="term" value="F:ferredoxin hydrogenase activity"/>
    <property type="evidence" value="ECO:0007669"/>
    <property type="project" value="InterPro"/>
</dbReference>
<dbReference type="GO" id="GO:0033748">
    <property type="term" value="F:hydrogenase (acceptor) activity"/>
    <property type="evidence" value="ECO:0007669"/>
    <property type="project" value="UniProtKB-EC"/>
</dbReference>
<dbReference type="GO" id="GO:0016151">
    <property type="term" value="F:nickel cation binding"/>
    <property type="evidence" value="ECO:0007669"/>
    <property type="project" value="InterPro"/>
</dbReference>
<dbReference type="FunFam" id="1.10.645.10:FF:000002">
    <property type="entry name" value="Hydrogenase 2 large subunit"/>
    <property type="match status" value="1"/>
</dbReference>
<dbReference type="Gene3D" id="1.10.645.10">
    <property type="entry name" value="Cytochrome-c3 Hydrogenase, chain B"/>
    <property type="match status" value="1"/>
</dbReference>
<dbReference type="InterPro" id="IPR001501">
    <property type="entry name" value="Ni-dep_hyd_lsu"/>
</dbReference>
<dbReference type="InterPro" id="IPR018194">
    <property type="entry name" value="Ni-dep_hyd_lsu_Ni_BS"/>
</dbReference>
<dbReference type="InterPro" id="IPR029014">
    <property type="entry name" value="NiFe-Hase_large"/>
</dbReference>
<dbReference type="InterPro" id="IPR050867">
    <property type="entry name" value="NiFe/NiFeSe_hydrgnase_LSU"/>
</dbReference>
<dbReference type="NCBIfam" id="NF007778">
    <property type="entry name" value="PRK10467.1"/>
    <property type="match status" value="1"/>
</dbReference>
<dbReference type="PANTHER" id="PTHR42958">
    <property type="entry name" value="HYDROGENASE-2 LARGE CHAIN"/>
    <property type="match status" value="1"/>
</dbReference>
<dbReference type="PANTHER" id="PTHR42958:SF1">
    <property type="entry name" value="HYDROGENASE-2 LARGE CHAIN"/>
    <property type="match status" value="1"/>
</dbReference>
<dbReference type="Pfam" id="PF00374">
    <property type="entry name" value="NiFeSe_Hases"/>
    <property type="match status" value="1"/>
</dbReference>
<dbReference type="SUPFAM" id="SSF56762">
    <property type="entry name" value="HydB/Nqo4-like"/>
    <property type="match status" value="1"/>
</dbReference>
<dbReference type="PROSITE" id="PS00507">
    <property type="entry name" value="NI_HGENASE_L_1"/>
    <property type="match status" value="1"/>
</dbReference>
<dbReference type="PROSITE" id="PS00508">
    <property type="entry name" value="NI_HGENASE_L_2"/>
    <property type="match status" value="1"/>
</dbReference>